<name>DKGB_ECO57</name>
<accession>Q8X7Z7</accession>
<gene>
    <name evidence="2" type="primary">dkgB</name>
    <name type="ordered locus">Z0229</name>
    <name type="ordered locus">ECs0203</name>
</gene>
<dbReference type="EC" id="1.1.1.-" evidence="2"/>
<dbReference type="EMBL" id="AE005174">
    <property type="protein sequence ID" value="AAG54503.1"/>
    <property type="molecule type" value="Genomic_DNA"/>
</dbReference>
<dbReference type="EMBL" id="BA000007">
    <property type="protein sequence ID" value="BAB33626.1"/>
    <property type="molecule type" value="Genomic_DNA"/>
</dbReference>
<dbReference type="EMBL" id="AB035926">
    <property type="protein sequence ID" value="BAA93569.1"/>
    <property type="molecule type" value="Genomic_DNA"/>
</dbReference>
<dbReference type="PIR" id="C85505">
    <property type="entry name" value="C85505"/>
</dbReference>
<dbReference type="PIR" id="C90654">
    <property type="entry name" value="C90654"/>
</dbReference>
<dbReference type="RefSeq" id="NP_308230.1">
    <property type="nucleotide sequence ID" value="NC_002695.1"/>
</dbReference>
<dbReference type="RefSeq" id="WP_000997018.1">
    <property type="nucleotide sequence ID" value="NZ_VOAI01000020.1"/>
</dbReference>
<dbReference type="SMR" id="Q8X7Z7"/>
<dbReference type="STRING" id="155864.Z0229"/>
<dbReference type="GeneID" id="914031"/>
<dbReference type="KEGG" id="ece:Z0229"/>
<dbReference type="KEGG" id="ecs:ECs_0203"/>
<dbReference type="PATRIC" id="fig|386585.9.peg.307"/>
<dbReference type="eggNOG" id="COG0656">
    <property type="taxonomic scope" value="Bacteria"/>
</dbReference>
<dbReference type="HOGENOM" id="CLU_023205_0_1_6"/>
<dbReference type="OMA" id="MVNQIFL"/>
<dbReference type="Proteomes" id="UP000000558">
    <property type="component" value="Chromosome"/>
</dbReference>
<dbReference type="Proteomes" id="UP000002519">
    <property type="component" value="Chromosome"/>
</dbReference>
<dbReference type="GO" id="GO:0005737">
    <property type="term" value="C:cytoplasm"/>
    <property type="evidence" value="ECO:0007669"/>
    <property type="project" value="UniProtKB-SubCell"/>
</dbReference>
<dbReference type="GO" id="GO:0004033">
    <property type="term" value="F:aldo-keto reductase (NADPH) activity"/>
    <property type="evidence" value="ECO:0007669"/>
    <property type="project" value="TreeGrafter"/>
</dbReference>
<dbReference type="GO" id="GO:1990002">
    <property type="term" value="F:methylglyoxal reductase (NADPH) (acetol producing) activity"/>
    <property type="evidence" value="ECO:0007669"/>
    <property type="project" value="TreeGrafter"/>
</dbReference>
<dbReference type="GO" id="GO:0019853">
    <property type="term" value="P:L-ascorbic acid biosynthetic process"/>
    <property type="evidence" value="ECO:0007669"/>
    <property type="project" value="UniProtKB-KW"/>
</dbReference>
<dbReference type="GO" id="GO:0051596">
    <property type="term" value="P:methylglyoxal catabolic process"/>
    <property type="evidence" value="ECO:0007669"/>
    <property type="project" value="TreeGrafter"/>
</dbReference>
<dbReference type="CDD" id="cd19139">
    <property type="entry name" value="AKR_AKR3F2"/>
    <property type="match status" value="1"/>
</dbReference>
<dbReference type="FunFam" id="3.20.20.100:FF:000016">
    <property type="entry name" value="2,5-diketo-D-gluconic acid reductase B"/>
    <property type="match status" value="1"/>
</dbReference>
<dbReference type="Gene3D" id="3.20.20.100">
    <property type="entry name" value="NADP-dependent oxidoreductase domain"/>
    <property type="match status" value="1"/>
</dbReference>
<dbReference type="InterPro" id="IPR020471">
    <property type="entry name" value="AKR"/>
</dbReference>
<dbReference type="InterPro" id="IPR018170">
    <property type="entry name" value="Aldo/ket_reductase_CS"/>
</dbReference>
<dbReference type="InterPro" id="IPR023210">
    <property type="entry name" value="NADP_OxRdtase_dom"/>
</dbReference>
<dbReference type="InterPro" id="IPR036812">
    <property type="entry name" value="NADP_OxRdtase_dom_sf"/>
</dbReference>
<dbReference type="NCBIfam" id="NF008377">
    <property type="entry name" value="PRK11172.1"/>
    <property type="match status" value="1"/>
</dbReference>
<dbReference type="PANTHER" id="PTHR43827">
    <property type="entry name" value="2,5-DIKETO-D-GLUCONIC ACID REDUCTASE"/>
    <property type="match status" value="1"/>
</dbReference>
<dbReference type="PANTHER" id="PTHR43827:SF3">
    <property type="entry name" value="NADP-DEPENDENT OXIDOREDUCTASE DOMAIN-CONTAINING PROTEIN"/>
    <property type="match status" value="1"/>
</dbReference>
<dbReference type="Pfam" id="PF00248">
    <property type="entry name" value="Aldo_ket_red"/>
    <property type="match status" value="1"/>
</dbReference>
<dbReference type="PIRSF" id="PIRSF000097">
    <property type="entry name" value="AKR"/>
    <property type="match status" value="1"/>
</dbReference>
<dbReference type="PRINTS" id="PR00069">
    <property type="entry name" value="ALDKETRDTASE"/>
</dbReference>
<dbReference type="SUPFAM" id="SSF51430">
    <property type="entry name" value="NAD(P)-linked oxidoreductase"/>
    <property type="match status" value="1"/>
</dbReference>
<dbReference type="PROSITE" id="PS00798">
    <property type="entry name" value="ALDOKETO_REDUCTASE_1"/>
    <property type="match status" value="1"/>
</dbReference>
<dbReference type="PROSITE" id="PS00062">
    <property type="entry name" value="ALDOKETO_REDUCTASE_2"/>
    <property type="match status" value="1"/>
</dbReference>
<proteinExistence type="inferred from homology"/>
<reference key="1">
    <citation type="journal article" date="2001" name="Nature">
        <title>Genome sequence of enterohaemorrhagic Escherichia coli O157:H7.</title>
        <authorList>
            <person name="Perna N.T."/>
            <person name="Plunkett G. III"/>
            <person name="Burland V."/>
            <person name="Mau B."/>
            <person name="Glasner J.D."/>
            <person name="Rose D.J."/>
            <person name="Mayhew G.F."/>
            <person name="Evans P.S."/>
            <person name="Gregor J."/>
            <person name="Kirkpatrick H.A."/>
            <person name="Posfai G."/>
            <person name="Hackett J."/>
            <person name="Klink S."/>
            <person name="Boutin A."/>
            <person name="Shao Y."/>
            <person name="Miller L."/>
            <person name="Grotbeck E.J."/>
            <person name="Davis N.W."/>
            <person name="Lim A."/>
            <person name="Dimalanta E.T."/>
            <person name="Potamousis K."/>
            <person name="Apodaca J."/>
            <person name="Anantharaman T.S."/>
            <person name="Lin J."/>
            <person name="Yen G."/>
            <person name="Schwartz D.C."/>
            <person name="Welch R.A."/>
            <person name="Blattner F.R."/>
        </authorList>
    </citation>
    <scope>NUCLEOTIDE SEQUENCE [LARGE SCALE GENOMIC DNA]</scope>
    <source>
        <strain>O157:H7 / EDL933 / ATCC 700927 / EHEC</strain>
    </source>
</reference>
<reference key="2">
    <citation type="journal article" date="2001" name="DNA Res.">
        <title>Complete genome sequence of enterohemorrhagic Escherichia coli O157:H7 and genomic comparison with a laboratory strain K-12.</title>
        <authorList>
            <person name="Hayashi T."/>
            <person name="Makino K."/>
            <person name="Ohnishi M."/>
            <person name="Kurokawa K."/>
            <person name="Ishii K."/>
            <person name="Yokoyama K."/>
            <person name="Han C.-G."/>
            <person name="Ohtsubo E."/>
            <person name="Nakayama K."/>
            <person name="Murata T."/>
            <person name="Tanaka M."/>
            <person name="Tobe T."/>
            <person name="Iida T."/>
            <person name="Takami H."/>
            <person name="Honda T."/>
            <person name="Sasakawa C."/>
            <person name="Ogasawara N."/>
            <person name="Yasunaga T."/>
            <person name="Kuhara S."/>
            <person name="Shiba T."/>
            <person name="Hattori M."/>
            <person name="Shinagawa H."/>
        </authorList>
    </citation>
    <scope>NUCLEOTIDE SEQUENCE [LARGE SCALE GENOMIC DNA]</scope>
    <source>
        <strain>O157:H7 / Sakai / RIMD 0509952 / EHEC</strain>
    </source>
</reference>
<reference key="3">
    <citation type="journal article" date="2000" name="Syst. Appl. Microbiol.">
        <title>Comparative analysis of the whole set of rRNA operons between an enterohemorrhagic Escherichia coli O157:H7 Sakai strain and an Escherichia coli K-12 strain MG1655.</title>
        <authorList>
            <person name="Ohnishi M."/>
            <person name="Murata T."/>
            <person name="Nakayama K."/>
            <person name="Kuhara S."/>
            <person name="Hattori M."/>
            <person name="Kurokawa K."/>
            <person name="Yasunaga T."/>
            <person name="Yokoyama K."/>
            <person name="Makino K."/>
            <person name="Shinagawa H."/>
            <person name="Hayashi T."/>
        </authorList>
    </citation>
    <scope>NUCLEOTIDE SEQUENCE [GENOMIC DNA] OF 1-206</scope>
    <source>
        <strain>O157:H7 / Sakai / RIMD 0509952 / EHEC</strain>
    </source>
</reference>
<organism>
    <name type="scientific">Escherichia coli O157:H7</name>
    <dbReference type="NCBI Taxonomy" id="83334"/>
    <lineage>
        <taxon>Bacteria</taxon>
        <taxon>Pseudomonadati</taxon>
        <taxon>Pseudomonadota</taxon>
        <taxon>Gammaproteobacteria</taxon>
        <taxon>Enterobacterales</taxon>
        <taxon>Enterobacteriaceae</taxon>
        <taxon>Escherichia</taxon>
    </lineage>
</organism>
<evidence type="ECO:0000250" key="1"/>
<evidence type="ECO:0000250" key="2">
    <source>
        <dbReference type="UniProtKB" id="P30863"/>
    </source>
</evidence>
<evidence type="ECO:0000305" key="3"/>
<keyword id="KW-0963">Cytoplasm</keyword>
<keyword id="KW-0521">NADP</keyword>
<keyword id="KW-0560">Oxidoreductase</keyword>
<keyword id="KW-1185">Reference proteome</keyword>
<feature type="chain" id="PRO_0000124605" description="Methylglyoxal reductase DkgB">
    <location>
        <begin position="1"/>
        <end position="267"/>
    </location>
</feature>
<feature type="active site" description="Proton donor" evidence="1">
    <location>
        <position position="39"/>
    </location>
</feature>
<feature type="binding site" evidence="1">
    <location>
        <position position="97"/>
    </location>
    <ligand>
        <name>substrate</name>
    </ligand>
</feature>
<feature type="binding site" evidence="1">
    <location>
        <begin position="179"/>
        <end position="231"/>
    </location>
    <ligand>
        <name>NADP(+)</name>
        <dbReference type="ChEBI" id="CHEBI:58349"/>
    </ligand>
</feature>
<sequence>MAIPAFGLGTFRLKDDVVISSVKTALELGYRAIDTAQIYDNEAAVGLAIAESGVPRHELYITTKIWIENLSKDKLIPSLKESLQKLRTDYVDLTLIHWPSPNDEVSVEEFMQALLEAKKEGLTREIGISNFTIPLMEKAIAAVGAENIATNQIELSPYLQNRKVVAWAKQHGIHITSYMTLAYGKALKDEVIARIAAKHNATPAQVILAWAMGEGYSVIPSSTKRENLESNLKAQNLQLDAEDKKAIAALDCNDRLVSPEGLAPEWD</sequence>
<protein>
    <recommendedName>
        <fullName evidence="2">Methylglyoxal reductase DkgB</fullName>
        <ecNumber evidence="2">1.1.1.-</ecNumber>
    </recommendedName>
</protein>
<comment type="function">
    <text evidence="2">Aldo-keto reductase that significantly contributes to cellular methylglyoxal detoxification by catalyzing the NADPH-dependent conversion of methylglyoxal to acetol.</text>
</comment>
<comment type="catalytic activity">
    <reaction evidence="2">
        <text>hydroxyacetone + NADP(+) = methylglyoxal + NADPH + H(+)</text>
        <dbReference type="Rhea" id="RHEA:27986"/>
        <dbReference type="ChEBI" id="CHEBI:15378"/>
        <dbReference type="ChEBI" id="CHEBI:17158"/>
        <dbReference type="ChEBI" id="CHEBI:27957"/>
        <dbReference type="ChEBI" id="CHEBI:57783"/>
        <dbReference type="ChEBI" id="CHEBI:58349"/>
    </reaction>
</comment>
<comment type="subunit">
    <text evidence="2">Monomer.</text>
</comment>
<comment type="subcellular location">
    <subcellularLocation>
        <location evidence="3">Cytoplasm</location>
    </subcellularLocation>
</comment>
<comment type="similarity">
    <text evidence="3">Belongs to the aldo/keto reductase family.</text>
</comment>